<gene>
    <name evidence="1" type="primary">rlmC</name>
    <name type="synonym">rumB</name>
    <name type="ordered locus">YpAngola_A1568</name>
</gene>
<evidence type="ECO:0000255" key="1">
    <source>
        <dbReference type="HAMAP-Rule" id="MF_01012"/>
    </source>
</evidence>
<protein>
    <recommendedName>
        <fullName evidence="1">23S rRNA (uracil(747)-C(5))-methyltransferase RlmC</fullName>
        <ecNumber evidence="1">2.1.1.189</ecNumber>
    </recommendedName>
    <alternativeName>
        <fullName evidence="1">23S rRNA(m5U747)-methyltransferase</fullName>
    </alternativeName>
</protein>
<feature type="chain" id="PRO_1000200878" description="23S rRNA (uracil(747)-C(5))-methyltransferase RlmC">
    <location>
        <begin position="1"/>
        <end position="376"/>
    </location>
</feature>
<feature type="active site" description="Nucleophile" evidence="1">
    <location>
        <position position="334"/>
    </location>
</feature>
<feature type="binding site" evidence="1">
    <location>
        <position position="3"/>
    </location>
    <ligand>
        <name>[4Fe-4S] cluster</name>
        <dbReference type="ChEBI" id="CHEBI:49883"/>
    </ligand>
</feature>
<feature type="binding site" evidence="1">
    <location>
        <position position="11"/>
    </location>
    <ligand>
        <name>[4Fe-4S] cluster</name>
        <dbReference type="ChEBI" id="CHEBI:49883"/>
    </ligand>
</feature>
<feature type="binding site" evidence="1">
    <location>
        <position position="14"/>
    </location>
    <ligand>
        <name>[4Fe-4S] cluster</name>
        <dbReference type="ChEBI" id="CHEBI:49883"/>
    </ligand>
</feature>
<feature type="binding site" evidence="1">
    <location>
        <position position="87"/>
    </location>
    <ligand>
        <name>[4Fe-4S] cluster</name>
        <dbReference type="ChEBI" id="CHEBI:49883"/>
    </ligand>
</feature>
<feature type="binding site" evidence="1">
    <location>
        <position position="212"/>
    </location>
    <ligand>
        <name>S-adenosyl-L-methionine</name>
        <dbReference type="ChEBI" id="CHEBI:59789"/>
    </ligand>
</feature>
<feature type="binding site" evidence="1">
    <location>
        <position position="241"/>
    </location>
    <ligand>
        <name>S-adenosyl-L-methionine</name>
        <dbReference type="ChEBI" id="CHEBI:59789"/>
    </ligand>
</feature>
<feature type="binding site" evidence="1">
    <location>
        <position position="262"/>
    </location>
    <ligand>
        <name>S-adenosyl-L-methionine</name>
        <dbReference type="ChEBI" id="CHEBI:59789"/>
    </ligand>
</feature>
<feature type="binding site" evidence="1">
    <location>
        <position position="307"/>
    </location>
    <ligand>
        <name>S-adenosyl-L-methionine</name>
        <dbReference type="ChEBI" id="CHEBI:59789"/>
    </ligand>
</feature>
<reference key="1">
    <citation type="journal article" date="2010" name="J. Bacteriol.">
        <title>Genome sequence of the deep-rooted Yersinia pestis strain Angola reveals new insights into the evolution and pangenome of the plague bacterium.</title>
        <authorList>
            <person name="Eppinger M."/>
            <person name="Worsham P.L."/>
            <person name="Nikolich M.P."/>
            <person name="Riley D.R."/>
            <person name="Sebastian Y."/>
            <person name="Mou S."/>
            <person name="Achtman M."/>
            <person name="Lindler L.E."/>
            <person name="Ravel J."/>
        </authorList>
    </citation>
    <scope>NUCLEOTIDE SEQUENCE [LARGE SCALE GENOMIC DNA]</scope>
    <source>
        <strain>Angola</strain>
    </source>
</reference>
<accession>A9R4V6</accession>
<comment type="function">
    <text evidence="1">Catalyzes the formation of 5-methyl-uridine at position 747 (m5U747) in 23S rRNA.</text>
</comment>
<comment type="catalytic activity">
    <reaction evidence="1">
        <text>uridine(747) in 23S rRNA + S-adenosyl-L-methionine = 5-methyluridine(747) in 23S rRNA + S-adenosyl-L-homocysteine + H(+)</text>
        <dbReference type="Rhea" id="RHEA:42628"/>
        <dbReference type="Rhea" id="RHEA-COMP:10154"/>
        <dbReference type="Rhea" id="RHEA-COMP:10155"/>
        <dbReference type="ChEBI" id="CHEBI:15378"/>
        <dbReference type="ChEBI" id="CHEBI:57856"/>
        <dbReference type="ChEBI" id="CHEBI:59789"/>
        <dbReference type="ChEBI" id="CHEBI:65315"/>
        <dbReference type="ChEBI" id="CHEBI:74447"/>
        <dbReference type="EC" id="2.1.1.189"/>
    </reaction>
</comment>
<comment type="similarity">
    <text evidence="1">Belongs to the class I-like SAM-binding methyltransferase superfamily. RNA M5U methyltransferase family. RlmC subfamily.</text>
</comment>
<sequence length="376" mass="42202">MHCAQYTAGRCRSCQWLDKPYPQQLADKQHHLESLLAGHAVTQWLAPVFGRESAFRNKAKMVVSGSVERPLLGMLHRDGTPVDLCACPLYPPSFEPVFTVLKTFIARAGLTPYNVARKRGELKFLLLTESTYNGELMLRFVLRSETKLAQLIAALPWLQQQLPQLAVISANIQPVHMAILEGEREIPLTEQQALPERFNQVPLYIRPQSFFQTNPQVAASLYATARQWVQEHEVHSMWDLFCGVGGFGLHCAGPETQLTGIEINAEAIACARQSAEQLGLKNVSFAALDSTRFATAEAQIPELVLVNPPRRGIGRELCDYLSQMAPKFILYSSCNAETMAKDISLLAGYHIERVQLFDMFPHTSHYEVLTLLTLRR</sequence>
<proteinExistence type="inferred from homology"/>
<dbReference type="EC" id="2.1.1.189" evidence="1"/>
<dbReference type="EMBL" id="CP000901">
    <property type="protein sequence ID" value="ABX85922.1"/>
    <property type="molecule type" value="Genomic_DNA"/>
</dbReference>
<dbReference type="RefSeq" id="WP_002208756.1">
    <property type="nucleotide sequence ID" value="NZ_CP009935.1"/>
</dbReference>
<dbReference type="SMR" id="A9R4V6"/>
<dbReference type="GeneID" id="57977467"/>
<dbReference type="KEGG" id="ypg:YpAngola_A1568"/>
<dbReference type="PATRIC" id="fig|349746.12.peg.2532"/>
<dbReference type="GO" id="GO:0051539">
    <property type="term" value="F:4 iron, 4 sulfur cluster binding"/>
    <property type="evidence" value="ECO:0007669"/>
    <property type="project" value="UniProtKB-KW"/>
</dbReference>
<dbReference type="GO" id="GO:0005506">
    <property type="term" value="F:iron ion binding"/>
    <property type="evidence" value="ECO:0007669"/>
    <property type="project" value="UniProtKB-UniRule"/>
</dbReference>
<dbReference type="GO" id="GO:0070041">
    <property type="term" value="F:rRNA (uridine-C5-)-methyltransferase activity"/>
    <property type="evidence" value="ECO:0007669"/>
    <property type="project" value="UniProtKB-UniRule"/>
</dbReference>
<dbReference type="GO" id="GO:0070475">
    <property type="term" value="P:rRNA base methylation"/>
    <property type="evidence" value="ECO:0007669"/>
    <property type="project" value="TreeGrafter"/>
</dbReference>
<dbReference type="CDD" id="cd02440">
    <property type="entry name" value="AdoMet_MTases"/>
    <property type="match status" value="1"/>
</dbReference>
<dbReference type="FunFam" id="2.40.50.1070:FF:000002">
    <property type="entry name" value="23S rRNA (uracil(747)-C(5))-methyltransferase RlmC"/>
    <property type="match status" value="1"/>
</dbReference>
<dbReference type="Gene3D" id="2.40.50.1070">
    <property type="match status" value="1"/>
</dbReference>
<dbReference type="Gene3D" id="3.40.50.150">
    <property type="entry name" value="Vaccinia Virus protein VP39"/>
    <property type="match status" value="1"/>
</dbReference>
<dbReference type="HAMAP" id="MF_01012">
    <property type="entry name" value="23SrRNA_methyltr_RlmC"/>
    <property type="match status" value="1"/>
</dbReference>
<dbReference type="InterPro" id="IPR011825">
    <property type="entry name" value="23SrRNA_MeTrfase_RlmC"/>
</dbReference>
<dbReference type="InterPro" id="IPR030390">
    <property type="entry name" value="MeTrfase_TrmA_AS"/>
</dbReference>
<dbReference type="InterPro" id="IPR030391">
    <property type="entry name" value="MeTrfase_TrmA_CS"/>
</dbReference>
<dbReference type="InterPro" id="IPR029063">
    <property type="entry name" value="SAM-dependent_MTases_sf"/>
</dbReference>
<dbReference type="InterPro" id="IPR010280">
    <property type="entry name" value="U5_MeTrfase_fam"/>
</dbReference>
<dbReference type="NCBIfam" id="TIGR02085">
    <property type="entry name" value="meth_trns_rumB"/>
    <property type="match status" value="1"/>
</dbReference>
<dbReference type="NCBIfam" id="TIGR00479">
    <property type="entry name" value="rumA"/>
    <property type="match status" value="1"/>
</dbReference>
<dbReference type="PANTHER" id="PTHR11061">
    <property type="entry name" value="RNA M5U METHYLTRANSFERASE"/>
    <property type="match status" value="1"/>
</dbReference>
<dbReference type="PANTHER" id="PTHR11061:SF30">
    <property type="entry name" value="TRNA (URACIL(54)-C(5))-METHYLTRANSFERASE"/>
    <property type="match status" value="1"/>
</dbReference>
<dbReference type="Pfam" id="PF05958">
    <property type="entry name" value="tRNA_U5-meth_tr"/>
    <property type="match status" value="1"/>
</dbReference>
<dbReference type="SUPFAM" id="SSF53335">
    <property type="entry name" value="S-adenosyl-L-methionine-dependent methyltransferases"/>
    <property type="match status" value="1"/>
</dbReference>
<dbReference type="PROSITE" id="PS51687">
    <property type="entry name" value="SAM_MT_RNA_M5U"/>
    <property type="match status" value="1"/>
</dbReference>
<dbReference type="PROSITE" id="PS01230">
    <property type="entry name" value="TRMA_1"/>
    <property type="match status" value="1"/>
</dbReference>
<dbReference type="PROSITE" id="PS01231">
    <property type="entry name" value="TRMA_2"/>
    <property type="match status" value="1"/>
</dbReference>
<organism>
    <name type="scientific">Yersinia pestis bv. Antiqua (strain Angola)</name>
    <dbReference type="NCBI Taxonomy" id="349746"/>
    <lineage>
        <taxon>Bacteria</taxon>
        <taxon>Pseudomonadati</taxon>
        <taxon>Pseudomonadota</taxon>
        <taxon>Gammaproteobacteria</taxon>
        <taxon>Enterobacterales</taxon>
        <taxon>Yersiniaceae</taxon>
        <taxon>Yersinia</taxon>
    </lineage>
</organism>
<name>RLMC_YERPG</name>
<keyword id="KW-0004">4Fe-4S</keyword>
<keyword id="KW-0408">Iron</keyword>
<keyword id="KW-0411">Iron-sulfur</keyword>
<keyword id="KW-0479">Metal-binding</keyword>
<keyword id="KW-0489">Methyltransferase</keyword>
<keyword id="KW-0698">rRNA processing</keyword>
<keyword id="KW-0949">S-adenosyl-L-methionine</keyword>
<keyword id="KW-0808">Transferase</keyword>